<protein>
    <recommendedName>
        <fullName>NADH-quinone oxidoreductase subunit F</fullName>
        <ecNumber>7.1.1.-</ecNumber>
    </recommendedName>
    <alternativeName>
        <fullName>NADH dehydrogenase I subunit F</fullName>
    </alternativeName>
    <alternativeName>
        <fullName>NDH-1 subunit F</fullName>
    </alternativeName>
</protein>
<proteinExistence type="inferred from homology"/>
<reference key="1">
    <citation type="submission" date="2007-09" db="EMBL/GenBank/DDBJ databases">
        <title>Complete genome sequence of Rickettsia akari.</title>
        <authorList>
            <person name="Madan A."/>
            <person name="Fahey J."/>
            <person name="Helton E."/>
            <person name="Ketteman M."/>
            <person name="Madan A."/>
            <person name="Rodrigues S."/>
            <person name="Sanchez A."/>
            <person name="Whiting M."/>
            <person name="Dasch G."/>
            <person name="Eremeeva M."/>
        </authorList>
    </citation>
    <scope>NUCLEOTIDE SEQUENCE [LARGE SCALE GENOMIC DNA]</scope>
    <source>
        <strain>Hartford</strain>
    </source>
</reference>
<gene>
    <name type="primary">nuoF</name>
    <name type="ordered locus">A1C_00860</name>
</gene>
<sequence length="423" mass="46537">MLKEEDKIFTNLHGGQIHDLKSSKKRGDWDNTKALLDKGRDFIIEEIKKSGLRGRGGAGFSTGMKWSFMPKNSEKPCYLVVNADESEPGTCKDRDILRFEPHKLIEGCLLASFAIGANNCYIYIRGEFYNEASNIQRALDEAYKDRLIGKNACGSGFDCNIYLHRGAGAYICGEETALLESLEGKKGMPRLKPPFPAGFGLYGCPTTINNVESIAVVPTILRRRASWFASIGKPNNTGTKIFCISGHVNKPCNVEEAMGISLKELIEKYAGGVRGGWDNLKAIIPGGSSVPLLPKSLCEVDMDFDSLRTVGSGLGTGGIIVMDKSTDIIYAIARLSKFYMHESCGQCTPCREGTGWMWRVMIRLVKGNAKKSEIDELLNVTKEIEGHTICALGDAAAWPIQGLIRHFRSEIEDRIKSYSVAIS</sequence>
<evidence type="ECO:0000250" key="1"/>
<evidence type="ECO:0000255" key="2"/>
<evidence type="ECO:0000305" key="3"/>
<organism>
    <name type="scientific">Rickettsia akari (strain Hartford)</name>
    <dbReference type="NCBI Taxonomy" id="293614"/>
    <lineage>
        <taxon>Bacteria</taxon>
        <taxon>Pseudomonadati</taxon>
        <taxon>Pseudomonadota</taxon>
        <taxon>Alphaproteobacteria</taxon>
        <taxon>Rickettsiales</taxon>
        <taxon>Rickettsiaceae</taxon>
        <taxon>Rickettsieae</taxon>
        <taxon>Rickettsia</taxon>
        <taxon>spotted fever group</taxon>
    </lineage>
</organism>
<accession>A8GM77</accession>
<dbReference type="EC" id="7.1.1.-"/>
<dbReference type="EMBL" id="CP000847">
    <property type="protein sequence ID" value="ABV74502.1"/>
    <property type="molecule type" value="Genomic_DNA"/>
</dbReference>
<dbReference type="RefSeq" id="WP_012013372.1">
    <property type="nucleotide sequence ID" value="NC_009881.1"/>
</dbReference>
<dbReference type="SMR" id="A8GM77"/>
<dbReference type="STRING" id="293614.A1C_00860"/>
<dbReference type="KEGG" id="rak:A1C_00860"/>
<dbReference type="eggNOG" id="COG1894">
    <property type="taxonomic scope" value="Bacteria"/>
</dbReference>
<dbReference type="HOGENOM" id="CLU_014881_0_1_5"/>
<dbReference type="Proteomes" id="UP000006830">
    <property type="component" value="Chromosome"/>
</dbReference>
<dbReference type="GO" id="GO:0051539">
    <property type="term" value="F:4 iron, 4 sulfur cluster binding"/>
    <property type="evidence" value="ECO:0007669"/>
    <property type="project" value="UniProtKB-KW"/>
</dbReference>
<dbReference type="GO" id="GO:0010181">
    <property type="term" value="F:FMN binding"/>
    <property type="evidence" value="ECO:0007669"/>
    <property type="project" value="InterPro"/>
</dbReference>
<dbReference type="GO" id="GO:0046872">
    <property type="term" value="F:metal ion binding"/>
    <property type="evidence" value="ECO:0007669"/>
    <property type="project" value="UniProtKB-KW"/>
</dbReference>
<dbReference type="GO" id="GO:0051287">
    <property type="term" value="F:NAD binding"/>
    <property type="evidence" value="ECO:0007669"/>
    <property type="project" value="InterPro"/>
</dbReference>
<dbReference type="GO" id="GO:0008137">
    <property type="term" value="F:NADH dehydrogenase (ubiquinone) activity"/>
    <property type="evidence" value="ECO:0007669"/>
    <property type="project" value="InterPro"/>
</dbReference>
<dbReference type="GO" id="GO:0048038">
    <property type="term" value="F:quinone binding"/>
    <property type="evidence" value="ECO:0007669"/>
    <property type="project" value="UniProtKB-KW"/>
</dbReference>
<dbReference type="FunFam" id="1.20.1440.230:FF:000001">
    <property type="entry name" value="Mitochondrial NADH dehydrogenase flavoprotein 1"/>
    <property type="match status" value="1"/>
</dbReference>
<dbReference type="FunFam" id="3.10.20.600:FF:000001">
    <property type="entry name" value="NADH dehydrogenase [ubiquinone] flavoprotein 1, mitochondrial"/>
    <property type="match status" value="1"/>
</dbReference>
<dbReference type="FunFam" id="3.40.50.11540:FF:000001">
    <property type="entry name" value="NADH dehydrogenase [ubiquinone] flavoprotein 1, mitochondrial"/>
    <property type="match status" value="1"/>
</dbReference>
<dbReference type="Gene3D" id="3.10.20.600">
    <property type="match status" value="1"/>
</dbReference>
<dbReference type="Gene3D" id="3.40.50.11540">
    <property type="entry name" value="NADH-ubiquinone oxidoreductase 51kDa subunit"/>
    <property type="match status" value="1"/>
</dbReference>
<dbReference type="Gene3D" id="1.20.1440.230">
    <property type="entry name" value="NADH-ubiquinone oxidoreductase 51kDa subunit, iron-sulphur binding domain"/>
    <property type="match status" value="1"/>
</dbReference>
<dbReference type="InterPro" id="IPR050837">
    <property type="entry name" value="ComplexI_51kDa_subunit"/>
</dbReference>
<dbReference type="InterPro" id="IPR001949">
    <property type="entry name" value="NADH-UbQ_OxRdtase_51kDa_CS"/>
</dbReference>
<dbReference type="InterPro" id="IPR011537">
    <property type="entry name" value="NADH-UbQ_OxRdtase_suF"/>
</dbReference>
<dbReference type="InterPro" id="IPR011538">
    <property type="entry name" value="Nuo51_FMN-bd"/>
</dbReference>
<dbReference type="InterPro" id="IPR037225">
    <property type="entry name" value="Nuo51_FMN-bd_sf"/>
</dbReference>
<dbReference type="InterPro" id="IPR019575">
    <property type="entry name" value="Nuop51_4Fe4S-bd"/>
</dbReference>
<dbReference type="InterPro" id="IPR037207">
    <property type="entry name" value="Nuop51_4Fe4S-bd_sf"/>
</dbReference>
<dbReference type="InterPro" id="IPR054765">
    <property type="entry name" value="SLBB_dom"/>
</dbReference>
<dbReference type="NCBIfam" id="TIGR01959">
    <property type="entry name" value="nuoF_fam"/>
    <property type="match status" value="1"/>
</dbReference>
<dbReference type="NCBIfam" id="NF010120">
    <property type="entry name" value="PRK13596.1"/>
    <property type="match status" value="1"/>
</dbReference>
<dbReference type="PANTHER" id="PTHR11780:SF10">
    <property type="entry name" value="NADH DEHYDROGENASE [UBIQUINONE] FLAVOPROTEIN 1, MITOCHONDRIAL"/>
    <property type="match status" value="1"/>
</dbReference>
<dbReference type="PANTHER" id="PTHR11780">
    <property type="entry name" value="NADH-UBIQUINONE OXIDOREDUCTASE FLAVOPROTEIN 1 NDUFV1"/>
    <property type="match status" value="1"/>
</dbReference>
<dbReference type="Pfam" id="PF01512">
    <property type="entry name" value="Complex1_51K"/>
    <property type="match status" value="1"/>
</dbReference>
<dbReference type="Pfam" id="PF10589">
    <property type="entry name" value="NADH_4Fe-4S"/>
    <property type="match status" value="1"/>
</dbReference>
<dbReference type="Pfam" id="PF22461">
    <property type="entry name" value="SLBB_2"/>
    <property type="match status" value="1"/>
</dbReference>
<dbReference type="SMART" id="SM00928">
    <property type="entry name" value="NADH_4Fe-4S"/>
    <property type="match status" value="1"/>
</dbReference>
<dbReference type="SUPFAM" id="SSF142019">
    <property type="entry name" value="Nqo1 FMN-binding domain-like"/>
    <property type="match status" value="1"/>
</dbReference>
<dbReference type="SUPFAM" id="SSF142984">
    <property type="entry name" value="Nqo1 middle domain-like"/>
    <property type="match status" value="1"/>
</dbReference>
<dbReference type="SUPFAM" id="SSF140490">
    <property type="entry name" value="Nqo1C-terminal domain-like"/>
    <property type="match status" value="1"/>
</dbReference>
<dbReference type="PROSITE" id="PS00644">
    <property type="entry name" value="COMPLEX1_51K_1"/>
    <property type="match status" value="1"/>
</dbReference>
<dbReference type="PROSITE" id="PS00645">
    <property type="entry name" value="COMPLEX1_51K_2"/>
    <property type="match status" value="1"/>
</dbReference>
<keyword id="KW-0004">4Fe-4S</keyword>
<keyword id="KW-0285">Flavoprotein</keyword>
<keyword id="KW-0288">FMN</keyword>
<keyword id="KW-0408">Iron</keyword>
<keyword id="KW-0411">Iron-sulfur</keyword>
<keyword id="KW-0479">Metal-binding</keyword>
<keyword id="KW-0520">NAD</keyword>
<keyword id="KW-0874">Quinone</keyword>
<keyword id="KW-1278">Translocase</keyword>
<feature type="chain" id="PRO_0000316284" description="NADH-quinone oxidoreductase subunit F">
    <location>
        <begin position="1"/>
        <end position="423"/>
    </location>
</feature>
<feature type="binding site" evidence="1">
    <location>
        <begin position="54"/>
        <end position="63"/>
    </location>
    <ligand>
        <name>NAD(+)</name>
        <dbReference type="ChEBI" id="CHEBI:57540"/>
    </ligand>
</feature>
<feature type="binding site" evidence="1">
    <location>
        <begin position="166"/>
        <end position="213"/>
    </location>
    <ligand>
        <name>FMN</name>
        <dbReference type="ChEBI" id="CHEBI:58210"/>
    </ligand>
</feature>
<feature type="binding site" evidence="2">
    <location>
        <position position="344"/>
    </location>
    <ligand>
        <name>[4Fe-4S] cluster</name>
        <dbReference type="ChEBI" id="CHEBI:49883"/>
    </ligand>
</feature>
<feature type="binding site" evidence="2">
    <location>
        <position position="347"/>
    </location>
    <ligand>
        <name>[4Fe-4S] cluster</name>
        <dbReference type="ChEBI" id="CHEBI:49883"/>
    </ligand>
</feature>
<feature type="binding site" evidence="2">
    <location>
        <position position="350"/>
    </location>
    <ligand>
        <name>[4Fe-4S] cluster</name>
        <dbReference type="ChEBI" id="CHEBI:49883"/>
    </ligand>
</feature>
<feature type="binding site" evidence="2">
    <location>
        <position position="390"/>
    </location>
    <ligand>
        <name>[4Fe-4S] cluster</name>
        <dbReference type="ChEBI" id="CHEBI:49883"/>
    </ligand>
</feature>
<name>NUOF_RICAH</name>
<comment type="function">
    <text evidence="1">NDH-1 shuttles electrons from NADH, via FMN and iron-sulfur (Fe-S) centers, to quinones in the respiratory chain. Couples the redox reaction to proton translocation (for every two electrons transferred, four hydrogen ions are translocated across the cytoplasmic membrane), and thus conserves the redox energy in a proton gradient (By similarity).</text>
</comment>
<comment type="catalytic activity">
    <reaction>
        <text>a quinone + NADH + 5 H(+)(in) = a quinol + NAD(+) + 4 H(+)(out)</text>
        <dbReference type="Rhea" id="RHEA:57888"/>
        <dbReference type="ChEBI" id="CHEBI:15378"/>
        <dbReference type="ChEBI" id="CHEBI:24646"/>
        <dbReference type="ChEBI" id="CHEBI:57540"/>
        <dbReference type="ChEBI" id="CHEBI:57945"/>
        <dbReference type="ChEBI" id="CHEBI:132124"/>
    </reaction>
</comment>
<comment type="cofactor">
    <cofactor evidence="3">
        <name>FMN</name>
        <dbReference type="ChEBI" id="CHEBI:58210"/>
    </cofactor>
    <text evidence="3">Binds 1 FMN.</text>
</comment>
<comment type="cofactor">
    <cofactor evidence="3">
        <name>[4Fe-4S] cluster</name>
        <dbReference type="ChEBI" id="CHEBI:49883"/>
    </cofactor>
    <text evidence="3">Binds 1 [4Fe-4S] cluster.</text>
</comment>
<comment type="similarity">
    <text evidence="3">Belongs to the complex I 51 kDa subunit family.</text>
</comment>